<reference key="1">
    <citation type="journal article" date="2010" name="Genome Biol. Evol.">
        <title>Continuing evolution of Burkholderia mallei through genome reduction and large-scale rearrangements.</title>
        <authorList>
            <person name="Losada L."/>
            <person name="Ronning C.M."/>
            <person name="DeShazer D."/>
            <person name="Woods D."/>
            <person name="Fedorova N."/>
            <person name="Kim H.S."/>
            <person name="Shabalina S.A."/>
            <person name="Pearson T.R."/>
            <person name="Brinkac L."/>
            <person name="Tan P."/>
            <person name="Nandi T."/>
            <person name="Crabtree J."/>
            <person name="Badger J."/>
            <person name="Beckstrom-Sternberg S."/>
            <person name="Saqib M."/>
            <person name="Schutzer S.E."/>
            <person name="Keim P."/>
            <person name="Nierman W.C."/>
        </authorList>
    </citation>
    <scope>NUCLEOTIDE SEQUENCE [LARGE SCALE GENOMIC DNA]</scope>
    <source>
        <strain>NCTC 10229</strain>
    </source>
</reference>
<organism>
    <name type="scientific">Burkholderia mallei (strain NCTC 10229)</name>
    <dbReference type="NCBI Taxonomy" id="412022"/>
    <lineage>
        <taxon>Bacteria</taxon>
        <taxon>Pseudomonadati</taxon>
        <taxon>Pseudomonadota</taxon>
        <taxon>Betaproteobacteria</taxon>
        <taxon>Burkholderiales</taxon>
        <taxon>Burkholderiaceae</taxon>
        <taxon>Burkholderia</taxon>
        <taxon>pseudomallei group</taxon>
    </lineage>
</organism>
<comment type="function">
    <text evidence="1">ATP-dependent carboxylate-amine ligase which exhibits weak glutamate--cysteine ligase activity.</text>
</comment>
<comment type="catalytic activity">
    <reaction evidence="1">
        <text>L-cysteine + L-glutamate + ATP = gamma-L-glutamyl-L-cysteine + ADP + phosphate + H(+)</text>
        <dbReference type="Rhea" id="RHEA:13285"/>
        <dbReference type="ChEBI" id="CHEBI:15378"/>
        <dbReference type="ChEBI" id="CHEBI:29985"/>
        <dbReference type="ChEBI" id="CHEBI:30616"/>
        <dbReference type="ChEBI" id="CHEBI:35235"/>
        <dbReference type="ChEBI" id="CHEBI:43474"/>
        <dbReference type="ChEBI" id="CHEBI:58173"/>
        <dbReference type="ChEBI" id="CHEBI:456216"/>
        <dbReference type="EC" id="6.3.2.2"/>
    </reaction>
</comment>
<comment type="similarity">
    <text evidence="1">Belongs to the glutamate--cysteine ligase type 2 family. YbdK subfamily.</text>
</comment>
<gene>
    <name type="ordered locus">BMA10229_A1626</name>
</gene>
<accession>A2S6N7</accession>
<protein>
    <recommendedName>
        <fullName evidence="1">Putative glutamate--cysteine ligase 2</fullName>
        <ecNumber evidence="1">6.3.2.2</ecNumber>
    </recommendedName>
    <alternativeName>
        <fullName evidence="1">Gamma-glutamylcysteine synthetase 2</fullName>
        <shortName evidence="1">GCS 2</shortName>
        <shortName evidence="1">Gamma-GCS 2</shortName>
    </alternativeName>
</protein>
<proteinExistence type="inferred from homology"/>
<dbReference type="EC" id="6.3.2.2" evidence="1"/>
<dbReference type="EMBL" id="CP000546">
    <property type="protein sequence ID" value="ABN03535.1"/>
    <property type="molecule type" value="Genomic_DNA"/>
</dbReference>
<dbReference type="RefSeq" id="WP_004195787.1">
    <property type="nucleotide sequence ID" value="NC_008836.1"/>
</dbReference>
<dbReference type="SMR" id="A2S6N7"/>
<dbReference type="KEGG" id="bml:BMA10229_A1626"/>
<dbReference type="HOGENOM" id="CLU_044848_1_1_4"/>
<dbReference type="Proteomes" id="UP000002283">
    <property type="component" value="Chromosome I"/>
</dbReference>
<dbReference type="GO" id="GO:0005524">
    <property type="term" value="F:ATP binding"/>
    <property type="evidence" value="ECO:0007669"/>
    <property type="project" value="UniProtKB-KW"/>
</dbReference>
<dbReference type="GO" id="GO:0004357">
    <property type="term" value="F:glutamate-cysteine ligase activity"/>
    <property type="evidence" value="ECO:0007669"/>
    <property type="project" value="UniProtKB-EC"/>
</dbReference>
<dbReference type="GO" id="GO:0042398">
    <property type="term" value="P:modified amino acid biosynthetic process"/>
    <property type="evidence" value="ECO:0007669"/>
    <property type="project" value="InterPro"/>
</dbReference>
<dbReference type="Gene3D" id="3.30.590.20">
    <property type="match status" value="1"/>
</dbReference>
<dbReference type="HAMAP" id="MF_01609">
    <property type="entry name" value="Glu_cys_ligase_2"/>
    <property type="match status" value="1"/>
</dbReference>
<dbReference type="InterPro" id="IPR050141">
    <property type="entry name" value="GCL_type2/YbdK_subfam"/>
</dbReference>
<dbReference type="InterPro" id="IPR006336">
    <property type="entry name" value="GCS2"/>
</dbReference>
<dbReference type="InterPro" id="IPR014746">
    <property type="entry name" value="Gln_synth/guanido_kin_cat_dom"/>
</dbReference>
<dbReference type="InterPro" id="IPR011793">
    <property type="entry name" value="YbdK"/>
</dbReference>
<dbReference type="NCBIfam" id="TIGR02050">
    <property type="entry name" value="gshA_cyan_rel"/>
    <property type="match status" value="1"/>
</dbReference>
<dbReference type="NCBIfam" id="NF010040">
    <property type="entry name" value="PRK13516.1"/>
    <property type="match status" value="1"/>
</dbReference>
<dbReference type="PANTHER" id="PTHR36510">
    <property type="entry name" value="GLUTAMATE--CYSTEINE LIGASE 2-RELATED"/>
    <property type="match status" value="1"/>
</dbReference>
<dbReference type="PANTHER" id="PTHR36510:SF1">
    <property type="entry name" value="GLUTAMATE--CYSTEINE LIGASE 2-RELATED"/>
    <property type="match status" value="1"/>
</dbReference>
<dbReference type="Pfam" id="PF04107">
    <property type="entry name" value="GCS2"/>
    <property type="match status" value="1"/>
</dbReference>
<dbReference type="SUPFAM" id="SSF55931">
    <property type="entry name" value="Glutamine synthetase/guanido kinase"/>
    <property type="match status" value="1"/>
</dbReference>
<feature type="chain" id="PRO_1000069427" description="Putative glutamate--cysteine ligase 2">
    <location>
        <begin position="1"/>
        <end position="371"/>
    </location>
</feature>
<keyword id="KW-0067">ATP-binding</keyword>
<keyword id="KW-0436">Ligase</keyword>
<keyword id="KW-0547">Nucleotide-binding</keyword>
<sequence length="371" mass="41779">MALETFVNSEPFTFGVELEIQIVNTHNYDLTKAASDLMRLIKDAKFPGNITPEITESMIELSTGICRTHDQALGELHAIRDTLVSAADQLNVGLCGGGTHAFQQWSERQIFDAPRFQYISELYGYLAKQFTVFGQHVHIGCPDADSALFLLHSMSRFIPHFIALSASSPYVQNVDTGFHSARLNSVFAFPLSGRAPFVLTWHGFEEYFTKMVNTGVVNSMKDFYWDIRPKPGYGTIEVRVMDTPLSVDRAAAIACYIQTLARYLLIDRPLKLSEDDYLVYTFNRFEACRFGLEGTCVNPQTGERRTIAEDILDTLDRIAPHAAALGSRAALDEIGALAKARVNDASWLRTIFKQEKSLNETVRQQCLRWRE</sequence>
<name>GCS2_BURM9</name>
<evidence type="ECO:0000255" key="1">
    <source>
        <dbReference type="HAMAP-Rule" id="MF_01609"/>
    </source>
</evidence>